<evidence type="ECO:0000255" key="1">
    <source>
        <dbReference type="PROSITE-ProRule" id="PRU01023"/>
    </source>
</evidence>
<evidence type="ECO:0000256" key="2">
    <source>
        <dbReference type="SAM" id="MobiDB-lite"/>
    </source>
</evidence>
<evidence type="ECO:0000269" key="3">
    <source>
    </source>
</evidence>
<evidence type="ECO:0000303" key="4">
    <source>
    </source>
</evidence>
<evidence type="ECO:0000303" key="5">
    <source>
    </source>
</evidence>
<evidence type="ECO:0000305" key="6"/>
<comment type="function">
    <text evidence="6">May have S-adenosyl-L-methionine-dependent methyl-transferase activity.</text>
</comment>
<comment type="alternative products">
    <event type="alternative splicing"/>
    <isoform>
        <id>Q14AW5-1</id>
        <name>1</name>
        <sequence type="displayed"/>
    </isoform>
    <isoform>
        <id>Q14AW5-2</id>
        <name>2</name>
        <sequence type="described" ref="VSP_025984"/>
    </isoform>
    <isoform>
        <id>Q14AW5-3</id>
        <name>3</name>
        <sequence type="described" ref="VSP_025982 VSP_025983"/>
    </isoform>
    <isoform>
        <id>Q14AW5-4</id>
        <name>4</name>
        <sequence type="described" ref="VSP_025985"/>
    </isoform>
</comment>
<comment type="tissue specificity">
    <text evidence="3">Expressed in testis.</text>
</comment>
<comment type="developmental stage">
    <text evidence="3">Low expression in 12-day-old testes when the majority of advanced cells are in zygonema, but increased by 14 to 18 days of age when most spermatocytes are in pachynema.</text>
</comment>
<comment type="disruption phenotype">
    <text evidence="3">Male infertility. A mutation which results in the conversion of codon 333, encoding glutamine, into a premature stop codon is detected in chemically-induced mutant Ste5Jcs1 mice; these mice are characterized by sperm motility defects and infertility.</text>
</comment>
<comment type="similarity">
    <text evidence="1">Belongs to the class I-like SAM-binding methyltransferase superfamily. RsmB/NOP family.</text>
</comment>
<comment type="sequence caution" evidence="6">
    <conflict type="erroneous initiation">
        <sequence resource="EMBL-CDS" id="BAB29644"/>
    </conflict>
</comment>
<accession>Q14AW5</accession>
<accession>Q8BS48</accession>
<accession>Q9D5S9</accession>
<gene>
    <name type="primary">Nsun7</name>
</gene>
<protein>
    <recommendedName>
        <fullName>Putative methyltransferase NSUN7</fullName>
        <ecNumber>2.1.1.-</ecNumber>
    </recommendedName>
    <alternativeName>
        <fullName>NOL1/NOP2/Sun domain family member 7</fullName>
    </alternativeName>
</protein>
<organism>
    <name type="scientific">Mus musculus</name>
    <name type="common">Mouse</name>
    <dbReference type="NCBI Taxonomy" id="10090"/>
    <lineage>
        <taxon>Eukaryota</taxon>
        <taxon>Metazoa</taxon>
        <taxon>Chordata</taxon>
        <taxon>Craniata</taxon>
        <taxon>Vertebrata</taxon>
        <taxon>Euteleostomi</taxon>
        <taxon>Mammalia</taxon>
        <taxon>Eutheria</taxon>
        <taxon>Euarchontoglires</taxon>
        <taxon>Glires</taxon>
        <taxon>Rodentia</taxon>
        <taxon>Myomorpha</taxon>
        <taxon>Muroidea</taxon>
        <taxon>Muridae</taxon>
        <taxon>Murinae</taxon>
        <taxon>Mus</taxon>
        <taxon>Mus</taxon>
    </lineage>
</organism>
<keyword id="KW-0025">Alternative splicing</keyword>
<keyword id="KW-0489">Methyltransferase</keyword>
<keyword id="KW-1185">Reference proteome</keyword>
<keyword id="KW-0694">RNA-binding</keyword>
<keyword id="KW-0949">S-adenosyl-L-methionine</keyword>
<keyword id="KW-0808">Transferase</keyword>
<feature type="chain" id="PRO_0000289240" description="Putative methyltransferase NSUN7">
    <location>
        <begin position="1"/>
        <end position="724"/>
    </location>
</feature>
<feature type="region of interest" description="Disordered" evidence="2">
    <location>
        <begin position="542"/>
        <end position="574"/>
    </location>
</feature>
<feature type="region of interest" description="Disordered" evidence="2">
    <location>
        <begin position="595"/>
        <end position="629"/>
    </location>
</feature>
<feature type="region of interest" description="Disordered" evidence="2">
    <location>
        <begin position="698"/>
        <end position="724"/>
    </location>
</feature>
<feature type="compositionally biased region" description="Basic residues" evidence="2">
    <location>
        <begin position="543"/>
        <end position="554"/>
    </location>
</feature>
<feature type="compositionally biased region" description="Basic and acidic residues" evidence="2">
    <location>
        <begin position="562"/>
        <end position="572"/>
    </location>
</feature>
<feature type="compositionally biased region" description="Polar residues" evidence="2">
    <location>
        <begin position="595"/>
        <end position="618"/>
    </location>
</feature>
<feature type="active site" description="Nucleophile" evidence="1">
    <location>
        <position position="444"/>
    </location>
</feature>
<feature type="splice variant" id="VSP_025982" description="In isoform 3." evidence="5">
    <original>N</original>
    <variation>NS</variation>
    <location>
        <position position="36"/>
    </location>
</feature>
<feature type="splice variant" id="VSP_025983" description="In isoform 3." evidence="5">
    <original>DKSLLQDLSQGGLPKDKLETLVQQQFEQLTHAMKF</original>
    <variation>V</variation>
    <location>
        <begin position="399"/>
        <end position="433"/>
    </location>
</feature>
<feature type="splice variant" id="VSP_025984" description="In isoform 2." evidence="4">
    <original>VGVPRYLTSSTSRRKEKVKESTTSSHVRHPRPWL</original>
    <variation>DSSREDRINNFLIK</variation>
    <location>
        <begin position="691"/>
        <end position="724"/>
    </location>
</feature>
<feature type="splice variant" id="VSP_025985" description="In isoform 4." evidence="5">
    <original>VGVPRYLTSSTSRRKEKVKESTTSSHVRHPRPWL</original>
    <variation>RFCSSLGLF</variation>
    <location>
        <begin position="691"/>
        <end position="724"/>
    </location>
</feature>
<name>NSUN7_MOUSE</name>
<reference key="1">
    <citation type="journal article" date="2005" name="Science">
        <title>The transcriptional landscape of the mammalian genome.</title>
        <authorList>
            <person name="Carninci P."/>
            <person name="Kasukawa T."/>
            <person name="Katayama S."/>
            <person name="Gough J."/>
            <person name="Frith M.C."/>
            <person name="Maeda N."/>
            <person name="Oyama R."/>
            <person name="Ravasi T."/>
            <person name="Lenhard B."/>
            <person name="Wells C."/>
            <person name="Kodzius R."/>
            <person name="Shimokawa K."/>
            <person name="Bajic V.B."/>
            <person name="Brenner S.E."/>
            <person name="Batalov S."/>
            <person name="Forrest A.R."/>
            <person name="Zavolan M."/>
            <person name="Davis M.J."/>
            <person name="Wilming L.G."/>
            <person name="Aidinis V."/>
            <person name="Allen J.E."/>
            <person name="Ambesi-Impiombato A."/>
            <person name="Apweiler R."/>
            <person name="Aturaliya R.N."/>
            <person name="Bailey T.L."/>
            <person name="Bansal M."/>
            <person name="Baxter L."/>
            <person name="Beisel K.W."/>
            <person name="Bersano T."/>
            <person name="Bono H."/>
            <person name="Chalk A.M."/>
            <person name="Chiu K.P."/>
            <person name="Choudhary V."/>
            <person name="Christoffels A."/>
            <person name="Clutterbuck D.R."/>
            <person name="Crowe M.L."/>
            <person name="Dalla E."/>
            <person name="Dalrymple B.P."/>
            <person name="de Bono B."/>
            <person name="Della Gatta G."/>
            <person name="di Bernardo D."/>
            <person name="Down T."/>
            <person name="Engstrom P."/>
            <person name="Fagiolini M."/>
            <person name="Faulkner G."/>
            <person name="Fletcher C.F."/>
            <person name="Fukushima T."/>
            <person name="Furuno M."/>
            <person name="Futaki S."/>
            <person name="Gariboldi M."/>
            <person name="Georgii-Hemming P."/>
            <person name="Gingeras T.R."/>
            <person name="Gojobori T."/>
            <person name="Green R.E."/>
            <person name="Gustincich S."/>
            <person name="Harbers M."/>
            <person name="Hayashi Y."/>
            <person name="Hensch T.K."/>
            <person name="Hirokawa N."/>
            <person name="Hill D."/>
            <person name="Huminiecki L."/>
            <person name="Iacono M."/>
            <person name="Ikeo K."/>
            <person name="Iwama A."/>
            <person name="Ishikawa T."/>
            <person name="Jakt M."/>
            <person name="Kanapin A."/>
            <person name="Katoh M."/>
            <person name="Kawasawa Y."/>
            <person name="Kelso J."/>
            <person name="Kitamura H."/>
            <person name="Kitano H."/>
            <person name="Kollias G."/>
            <person name="Krishnan S.P."/>
            <person name="Kruger A."/>
            <person name="Kummerfeld S.K."/>
            <person name="Kurochkin I.V."/>
            <person name="Lareau L.F."/>
            <person name="Lazarevic D."/>
            <person name="Lipovich L."/>
            <person name="Liu J."/>
            <person name="Liuni S."/>
            <person name="McWilliam S."/>
            <person name="Madan Babu M."/>
            <person name="Madera M."/>
            <person name="Marchionni L."/>
            <person name="Matsuda H."/>
            <person name="Matsuzawa S."/>
            <person name="Miki H."/>
            <person name="Mignone F."/>
            <person name="Miyake S."/>
            <person name="Morris K."/>
            <person name="Mottagui-Tabar S."/>
            <person name="Mulder N."/>
            <person name="Nakano N."/>
            <person name="Nakauchi H."/>
            <person name="Ng P."/>
            <person name="Nilsson R."/>
            <person name="Nishiguchi S."/>
            <person name="Nishikawa S."/>
            <person name="Nori F."/>
            <person name="Ohara O."/>
            <person name="Okazaki Y."/>
            <person name="Orlando V."/>
            <person name="Pang K.C."/>
            <person name="Pavan W.J."/>
            <person name="Pavesi G."/>
            <person name="Pesole G."/>
            <person name="Petrovsky N."/>
            <person name="Piazza S."/>
            <person name="Reed J."/>
            <person name="Reid J.F."/>
            <person name="Ring B.Z."/>
            <person name="Ringwald M."/>
            <person name="Rost B."/>
            <person name="Ruan Y."/>
            <person name="Salzberg S.L."/>
            <person name="Sandelin A."/>
            <person name="Schneider C."/>
            <person name="Schoenbach C."/>
            <person name="Sekiguchi K."/>
            <person name="Semple C.A."/>
            <person name="Seno S."/>
            <person name="Sessa L."/>
            <person name="Sheng Y."/>
            <person name="Shibata Y."/>
            <person name="Shimada H."/>
            <person name="Shimada K."/>
            <person name="Silva D."/>
            <person name="Sinclair B."/>
            <person name="Sperling S."/>
            <person name="Stupka E."/>
            <person name="Sugiura K."/>
            <person name="Sultana R."/>
            <person name="Takenaka Y."/>
            <person name="Taki K."/>
            <person name="Tammoja K."/>
            <person name="Tan S.L."/>
            <person name="Tang S."/>
            <person name="Taylor M.S."/>
            <person name="Tegner J."/>
            <person name="Teichmann S.A."/>
            <person name="Ueda H.R."/>
            <person name="van Nimwegen E."/>
            <person name="Verardo R."/>
            <person name="Wei C.L."/>
            <person name="Yagi K."/>
            <person name="Yamanishi H."/>
            <person name="Zabarovsky E."/>
            <person name="Zhu S."/>
            <person name="Zimmer A."/>
            <person name="Hide W."/>
            <person name="Bult C."/>
            <person name="Grimmond S.M."/>
            <person name="Teasdale R.D."/>
            <person name="Liu E.T."/>
            <person name="Brusic V."/>
            <person name="Quackenbush J."/>
            <person name="Wahlestedt C."/>
            <person name="Mattick J.S."/>
            <person name="Hume D.A."/>
            <person name="Kai C."/>
            <person name="Sasaki D."/>
            <person name="Tomaru Y."/>
            <person name="Fukuda S."/>
            <person name="Kanamori-Katayama M."/>
            <person name="Suzuki M."/>
            <person name="Aoki J."/>
            <person name="Arakawa T."/>
            <person name="Iida J."/>
            <person name="Imamura K."/>
            <person name="Itoh M."/>
            <person name="Kato T."/>
            <person name="Kawaji H."/>
            <person name="Kawagashira N."/>
            <person name="Kawashima T."/>
            <person name="Kojima M."/>
            <person name="Kondo S."/>
            <person name="Konno H."/>
            <person name="Nakano K."/>
            <person name="Ninomiya N."/>
            <person name="Nishio T."/>
            <person name="Okada M."/>
            <person name="Plessy C."/>
            <person name="Shibata K."/>
            <person name="Shiraki T."/>
            <person name="Suzuki S."/>
            <person name="Tagami M."/>
            <person name="Waki K."/>
            <person name="Watahiki A."/>
            <person name="Okamura-Oho Y."/>
            <person name="Suzuki H."/>
            <person name="Kawai J."/>
            <person name="Hayashizaki Y."/>
        </authorList>
    </citation>
    <scope>NUCLEOTIDE SEQUENCE [LARGE SCALE MRNA] (ISOFORM 3)</scope>
    <scope>NUCLEOTIDE SEQUENCE [LARGE SCALE MRNA] OF 77-724 (ISOFORM 4)</scope>
    <source>
        <strain>C57BL/6J</strain>
        <tissue>Embryo</tissue>
        <tissue>Testis</tissue>
    </source>
</reference>
<reference key="2">
    <citation type="journal article" date="2004" name="Genome Res.">
        <title>The status, quality, and expansion of the NIH full-length cDNA project: the Mammalian Gene Collection (MGC).</title>
        <authorList>
            <consortium name="The MGC Project Team"/>
        </authorList>
    </citation>
    <scope>NUCLEOTIDE SEQUENCE [LARGE SCALE MRNA] (ISOFORM 2)</scope>
</reference>
<reference key="3">
    <citation type="journal article" date="2007" name="Biol. Reprod.">
        <title>Sperm motility defects and infertility in male mice with a mutation in Nsun7, a member of the Sun domain-containing family of putative RNA methyltransferases.</title>
        <authorList>
            <person name="Harris T."/>
            <person name="Marquez B."/>
            <person name="Suarez S."/>
            <person name="Schimenti J."/>
        </authorList>
    </citation>
    <scope>TISSUE SPECIFICITY</scope>
    <scope>DEVELOPMENTAL STAGE</scope>
    <scope>DISRUPTION PHENOTYPE</scope>
</reference>
<proteinExistence type="evidence at transcript level"/>
<sequence>MLDPTSERDLFDQENMEEISQLASLEMSGDVVANTNSTVVLEKPSYPDSVYVTAANIFQGIRIQRSPDKVIINYGSEPLQPSSSRSEDESFQRLSYELAFSTLKYQDILESILIDSYIFSSTTIASQLNSLIIVMLYDFQDRKFQPRILSENEETIPEVQEVENLLNGFKTKLAAALARCRIKHDALSIYHILPETVRKQEQRASTLPLYAWINTSKISLEEVYNNLRRKGYSKVKSITSVNEKVYAVDQHCFNVLIFPAHLKTDLLNIDLIKDYKLIFQDKSRSLAVHSVKALINIDDDVLMVNTGSWYTVAHMSILTSGHTSKIFVCGIQQEEKDFNARKLFTRMGCQNIEILHETFLSIESKDHRLQNVKVILLLPRCSSLGVSNPVEFILNEHEDKSLLQDLSQGGLPKDKLETLVQQQFEQLTHAMKFTKVQAIVYCTCSVSKEENEDVVEKALEYQSSGVKMQPYRLSPPVLPLCTLKEIELSMDRFFRLEPSDMNNGCFLSILTRERDPSETVSVKDVLARAAAKGLLEGVEVGKTLKRDKKRKKSKALPSRAPHHGDPLRDHLAVDGNDTSNVQMKISELLHRESKISTSTKMSAPAKTVSQAGTSSQVRKPSKPLSTPLVRNFSRPVERPTNFVRARPEGKVIPLKPIEIVLPPVIFPLSSQGPRVQMPATHFYYRFIGSKVGVPRYLTSSTSRRKEKVKESTTSSHVRHPRPWL</sequence>
<dbReference type="EC" id="2.1.1.-"/>
<dbReference type="EMBL" id="AK014968">
    <property type="protein sequence ID" value="BAB29644.1"/>
    <property type="status" value="ALT_INIT"/>
    <property type="molecule type" value="mRNA"/>
</dbReference>
<dbReference type="EMBL" id="AK035181">
    <property type="protein sequence ID" value="BAC28971.1"/>
    <property type="molecule type" value="mRNA"/>
</dbReference>
<dbReference type="EMBL" id="BC115878">
    <property type="protein sequence ID" value="AAI15879.1"/>
    <property type="molecule type" value="mRNA"/>
</dbReference>
<dbReference type="EMBL" id="BC116658">
    <property type="protein sequence ID" value="AAI16659.1"/>
    <property type="molecule type" value="mRNA"/>
</dbReference>
<dbReference type="CCDS" id="CCDS80291.1">
    <molecule id="Q14AW5-3"/>
</dbReference>
<dbReference type="RefSeq" id="NP_001289762.1">
    <property type="nucleotide sequence ID" value="NM_001302833.1"/>
</dbReference>
<dbReference type="RefSeq" id="NP_001289763.1">
    <molecule id="Q14AW5-3"/>
    <property type="nucleotide sequence ID" value="NM_001302834.2"/>
</dbReference>
<dbReference type="RefSeq" id="NP_081878.1">
    <property type="nucleotide sequence ID" value="NM_027602.2"/>
</dbReference>
<dbReference type="SMR" id="Q14AW5"/>
<dbReference type="FunCoup" id="Q14AW5">
    <property type="interactions" value="106"/>
</dbReference>
<dbReference type="IntAct" id="Q14AW5">
    <property type="interactions" value="2"/>
</dbReference>
<dbReference type="STRING" id="10090.ENSMUSP00000031109"/>
<dbReference type="GlyGen" id="Q14AW5">
    <property type="glycosylation" value="2 sites, 1 O-linked glycan (1 site)"/>
</dbReference>
<dbReference type="iPTMnet" id="Q14AW5"/>
<dbReference type="PhosphoSitePlus" id="Q14AW5"/>
<dbReference type="PaxDb" id="10090-ENSMUSP00000109349"/>
<dbReference type="ProteomicsDB" id="287827">
    <molecule id="Q14AW5-1"/>
</dbReference>
<dbReference type="ProteomicsDB" id="287828">
    <molecule id="Q14AW5-2"/>
</dbReference>
<dbReference type="ProteomicsDB" id="287829">
    <molecule id="Q14AW5-3"/>
</dbReference>
<dbReference type="ProteomicsDB" id="287830">
    <molecule id="Q14AW5-4"/>
</dbReference>
<dbReference type="Antibodypedia" id="11775">
    <property type="antibodies" value="37 antibodies from 12 providers"/>
</dbReference>
<dbReference type="DNASU" id="70918"/>
<dbReference type="Ensembl" id="ENSMUST00000202994.4">
    <molecule id="Q14AW5-3"/>
    <property type="protein sequence ID" value="ENSMUSP00000144498.2"/>
    <property type="gene ID" value="ENSMUSG00000029206.14"/>
</dbReference>
<dbReference type="GeneID" id="70918"/>
<dbReference type="KEGG" id="mmu:70918"/>
<dbReference type="UCSC" id="uc008xos.2">
    <molecule id="Q14AW5-3"/>
    <property type="organism name" value="mouse"/>
</dbReference>
<dbReference type="AGR" id="MGI:1918168"/>
<dbReference type="CTD" id="79730"/>
<dbReference type="MGI" id="MGI:1918168">
    <property type="gene designation" value="Nsun7"/>
</dbReference>
<dbReference type="VEuPathDB" id="HostDB:ENSMUSG00000029206"/>
<dbReference type="eggNOG" id="KOG2360">
    <property type="taxonomic scope" value="Eukaryota"/>
</dbReference>
<dbReference type="GeneTree" id="ENSGT00940000157352"/>
<dbReference type="InParanoid" id="Q14AW5"/>
<dbReference type="OrthoDB" id="6817893at2759"/>
<dbReference type="PhylomeDB" id="Q14AW5"/>
<dbReference type="BioGRID-ORCS" id="70918">
    <property type="hits" value="1 hit in 76 CRISPR screens"/>
</dbReference>
<dbReference type="ChiTaRS" id="Nsun7">
    <property type="organism name" value="mouse"/>
</dbReference>
<dbReference type="PRO" id="PR:Q14AW5"/>
<dbReference type="Proteomes" id="UP000000589">
    <property type="component" value="Chromosome 5"/>
</dbReference>
<dbReference type="RNAct" id="Q14AW5">
    <property type="molecule type" value="protein"/>
</dbReference>
<dbReference type="Bgee" id="ENSMUSG00000029206">
    <property type="expression patterns" value="Expressed in ventricular system choroidal fissure and 79 other cell types or tissues"/>
</dbReference>
<dbReference type="ExpressionAtlas" id="Q14AW5">
    <property type="expression patterns" value="baseline and differential"/>
</dbReference>
<dbReference type="GO" id="GO:0008168">
    <property type="term" value="F:methyltransferase activity"/>
    <property type="evidence" value="ECO:0007669"/>
    <property type="project" value="UniProtKB-KW"/>
</dbReference>
<dbReference type="GO" id="GO:0003723">
    <property type="term" value="F:RNA binding"/>
    <property type="evidence" value="ECO:0007669"/>
    <property type="project" value="UniProtKB-KW"/>
</dbReference>
<dbReference type="GO" id="GO:0030317">
    <property type="term" value="P:flagellated sperm motility"/>
    <property type="evidence" value="ECO:0000315"/>
    <property type="project" value="MGI"/>
</dbReference>
<dbReference type="GO" id="GO:0032259">
    <property type="term" value="P:methylation"/>
    <property type="evidence" value="ECO:0007669"/>
    <property type="project" value="UniProtKB-KW"/>
</dbReference>
<dbReference type="GO" id="GO:0030382">
    <property type="term" value="P:sperm mitochondrion organization"/>
    <property type="evidence" value="ECO:0000315"/>
    <property type="project" value="MGI"/>
</dbReference>
<dbReference type="FunFam" id="3.30.70.1170:FF:000015">
    <property type="entry name" value="Putative methyltransferase NSUN7"/>
    <property type="match status" value="1"/>
</dbReference>
<dbReference type="Gene3D" id="3.30.70.1170">
    <property type="entry name" value="Sun protein, domain 3"/>
    <property type="match status" value="1"/>
</dbReference>
<dbReference type="Gene3D" id="3.40.50.150">
    <property type="entry name" value="Vaccinia Virus protein VP39"/>
    <property type="match status" value="1"/>
</dbReference>
<dbReference type="InterPro" id="IPR049560">
    <property type="entry name" value="MeTrfase_RsmB-F_NOP2_cat"/>
</dbReference>
<dbReference type="InterPro" id="IPR001678">
    <property type="entry name" value="MeTrfase_RsmB-F_NOP2_dom"/>
</dbReference>
<dbReference type="InterPro" id="IPR049561">
    <property type="entry name" value="NSUN5_7_fdxn-like"/>
</dbReference>
<dbReference type="InterPro" id="IPR042620">
    <property type="entry name" value="NSUN7"/>
</dbReference>
<dbReference type="InterPro" id="IPR029063">
    <property type="entry name" value="SAM-dependent_MTases_sf"/>
</dbReference>
<dbReference type="PANTHER" id="PTHR14663">
    <property type="entry name" value="METHYLTRANSFERASE NSUN7-RELATED"/>
    <property type="match status" value="1"/>
</dbReference>
<dbReference type="PANTHER" id="PTHR14663:SF2">
    <property type="entry name" value="METHYLTRANSFERASE NSUN7-RELATED"/>
    <property type="match status" value="1"/>
</dbReference>
<dbReference type="Pfam" id="PF01189">
    <property type="entry name" value="Methyltr_RsmB-F"/>
    <property type="match status" value="1"/>
</dbReference>
<dbReference type="Pfam" id="PF21148">
    <property type="entry name" value="NSUN5_fdxn-like"/>
    <property type="match status" value="1"/>
</dbReference>
<dbReference type="SUPFAM" id="SSF53335">
    <property type="entry name" value="S-adenosyl-L-methionine-dependent methyltransferases"/>
    <property type="match status" value="1"/>
</dbReference>
<dbReference type="PROSITE" id="PS51686">
    <property type="entry name" value="SAM_MT_RSMB_NOP"/>
    <property type="match status" value="1"/>
</dbReference>